<accession>B1K2X7</accession>
<reference key="1">
    <citation type="submission" date="2008-02" db="EMBL/GenBank/DDBJ databases">
        <title>Complete sequence of chromosome 2 of Burkholderia cenocepacia MC0-3.</title>
        <authorList>
            <person name="Copeland A."/>
            <person name="Lucas S."/>
            <person name="Lapidus A."/>
            <person name="Barry K."/>
            <person name="Bruce D."/>
            <person name="Goodwin L."/>
            <person name="Glavina del Rio T."/>
            <person name="Dalin E."/>
            <person name="Tice H."/>
            <person name="Pitluck S."/>
            <person name="Chain P."/>
            <person name="Malfatti S."/>
            <person name="Shin M."/>
            <person name="Vergez L."/>
            <person name="Schmutz J."/>
            <person name="Larimer F."/>
            <person name="Land M."/>
            <person name="Hauser L."/>
            <person name="Kyrpides N."/>
            <person name="Mikhailova N."/>
            <person name="Tiedje J."/>
            <person name="Richardson P."/>
        </authorList>
    </citation>
    <scope>NUCLEOTIDE SEQUENCE [LARGE SCALE GENOMIC DNA]</scope>
    <source>
        <strain>MC0-3</strain>
    </source>
</reference>
<evidence type="ECO:0000255" key="1">
    <source>
        <dbReference type="HAMAP-Rule" id="MF_01242"/>
    </source>
</evidence>
<evidence type="ECO:0000255" key="2">
    <source>
        <dbReference type="PROSITE-ProRule" id="PRU00054"/>
    </source>
</evidence>
<proteinExistence type="inferred from homology"/>
<name>AMIE_BURO0</name>
<comment type="function">
    <text evidence="1">Catalyzes the hydrolysis of short-chain aliphatic amides to their corresponding organic acids with release of ammonia.</text>
</comment>
<comment type="function">
    <text evidence="1">Also exhibits in vitro acyl transferase activity, transferring the acyl moiety of short-chain amides to hydroxylamine to form hydroxamates.</text>
</comment>
<comment type="catalytic activity">
    <reaction evidence="1">
        <text>a monocarboxylic acid amide + H2O = a monocarboxylate + NH4(+)</text>
        <dbReference type="Rhea" id="RHEA:12020"/>
        <dbReference type="ChEBI" id="CHEBI:15377"/>
        <dbReference type="ChEBI" id="CHEBI:28938"/>
        <dbReference type="ChEBI" id="CHEBI:35757"/>
        <dbReference type="ChEBI" id="CHEBI:83628"/>
        <dbReference type="EC" id="3.5.1.4"/>
    </reaction>
</comment>
<comment type="similarity">
    <text evidence="1">Belongs to the carbon-nitrogen hydrolase superfamily. Aliphatic amidase family.</text>
</comment>
<feature type="chain" id="PRO_1000139804" description="Aliphatic amidase">
    <location>
        <begin position="1"/>
        <end position="341"/>
    </location>
</feature>
<feature type="domain" description="CN hydrolase" evidence="2">
    <location>
        <begin position="13"/>
        <end position="260"/>
    </location>
</feature>
<feature type="active site" description="Proton acceptor" evidence="1">
    <location>
        <position position="59"/>
    </location>
</feature>
<feature type="active site" description="Proton donor" evidence="1">
    <location>
        <position position="134"/>
    </location>
</feature>
<feature type="active site" description="Nucleophile" evidence="1">
    <location>
        <position position="166"/>
    </location>
</feature>
<sequence>MRHGDISSSRDCVGVAVVNYKMPRLHTKAEVLDNARRIADMVVGMKQGLPGMDLVVFPEYSTHGIMYDRQEMFDTASTIPGEETDIFAAACRKANVWGVFSITGERHEAHPHKVPYNTLVLIDNRGEIVQKYRKIMPWTPIEGWYPGDRTYVTDGPKGLKISLIICDDGNYPEIWRDCAMNGAELIVRCQGYMYPAKEQQVMVAKAMAWMNNTYVAVANATGWDGVYSYFGHSAIVGFDGRTLGECGEEEMGVQYAELSLGMIRDARRNMQSQNHLYKLLHRGYTGTIHSGDDANGVADCPFGFYRDWITDPDATRRRVEALTRATPGTPECPIEGIPHED</sequence>
<organism>
    <name type="scientific">Burkholderia orbicola (strain MC0-3)</name>
    <dbReference type="NCBI Taxonomy" id="406425"/>
    <lineage>
        <taxon>Bacteria</taxon>
        <taxon>Pseudomonadati</taxon>
        <taxon>Pseudomonadota</taxon>
        <taxon>Betaproteobacteria</taxon>
        <taxon>Burkholderiales</taxon>
        <taxon>Burkholderiaceae</taxon>
        <taxon>Burkholderia</taxon>
        <taxon>Burkholderia cepacia complex</taxon>
        <taxon>Burkholderia orbicola</taxon>
    </lineage>
</organism>
<gene>
    <name evidence="1" type="primary">amiE</name>
    <name type="ordered locus">Bcenmc03_5675</name>
</gene>
<dbReference type="EC" id="3.5.1.4" evidence="1"/>
<dbReference type="EMBL" id="CP000959">
    <property type="protein sequence ID" value="ACA94797.1"/>
    <property type="molecule type" value="Genomic_DNA"/>
</dbReference>
<dbReference type="RefSeq" id="WP_012339828.1">
    <property type="nucleotide sequence ID" value="NC_010515.1"/>
</dbReference>
<dbReference type="SMR" id="B1K2X7"/>
<dbReference type="GeneID" id="83052341"/>
<dbReference type="KEGG" id="bcm:Bcenmc03_5675"/>
<dbReference type="HOGENOM" id="CLU_071797_0_0_4"/>
<dbReference type="Proteomes" id="UP000002169">
    <property type="component" value="Chromosome 2"/>
</dbReference>
<dbReference type="GO" id="GO:0004040">
    <property type="term" value="F:amidase activity"/>
    <property type="evidence" value="ECO:0007669"/>
    <property type="project" value="UniProtKB-UniRule"/>
</dbReference>
<dbReference type="CDD" id="cd07565">
    <property type="entry name" value="aliphatic_amidase"/>
    <property type="match status" value="1"/>
</dbReference>
<dbReference type="Gene3D" id="3.60.110.10">
    <property type="entry name" value="Carbon-nitrogen hydrolase"/>
    <property type="match status" value="1"/>
</dbReference>
<dbReference type="HAMAP" id="MF_01242">
    <property type="entry name" value="Aliphatic_amidase"/>
    <property type="match status" value="1"/>
</dbReference>
<dbReference type="InterPro" id="IPR050345">
    <property type="entry name" value="Aliph_Amidase/BUP"/>
</dbReference>
<dbReference type="InterPro" id="IPR023719">
    <property type="entry name" value="Aliphatic_amidase"/>
</dbReference>
<dbReference type="InterPro" id="IPR003010">
    <property type="entry name" value="C-N_Hydrolase"/>
</dbReference>
<dbReference type="InterPro" id="IPR036526">
    <property type="entry name" value="C-N_Hydrolase_sf"/>
</dbReference>
<dbReference type="NCBIfam" id="NF009802">
    <property type="entry name" value="PRK13286.1"/>
    <property type="match status" value="1"/>
</dbReference>
<dbReference type="PANTHER" id="PTHR43674:SF14">
    <property type="entry name" value="ALIPHATIC AMIDASE"/>
    <property type="match status" value="1"/>
</dbReference>
<dbReference type="PANTHER" id="PTHR43674">
    <property type="entry name" value="NITRILASE C965.09-RELATED"/>
    <property type="match status" value="1"/>
</dbReference>
<dbReference type="Pfam" id="PF00795">
    <property type="entry name" value="CN_hydrolase"/>
    <property type="match status" value="1"/>
</dbReference>
<dbReference type="SUPFAM" id="SSF56317">
    <property type="entry name" value="Carbon-nitrogen hydrolase"/>
    <property type="match status" value="1"/>
</dbReference>
<dbReference type="PROSITE" id="PS50263">
    <property type="entry name" value="CN_HYDROLASE"/>
    <property type="match status" value="1"/>
</dbReference>
<protein>
    <recommendedName>
        <fullName evidence="1">Aliphatic amidase</fullName>
        <ecNumber evidence="1">3.5.1.4</ecNumber>
    </recommendedName>
    <alternativeName>
        <fullName evidence="1">Acylamide amidohydrolase</fullName>
    </alternativeName>
</protein>
<keyword id="KW-0378">Hydrolase</keyword>